<name>STT3A_MOUSE</name>
<feature type="chain" id="PRO_0000072291" description="Dolichyl-diphosphooligosaccharide--protein glycosyltransferase subunit STT3A">
    <location>
        <begin position="1"/>
        <end position="705"/>
    </location>
</feature>
<feature type="topological domain" description="Cytoplasmic" evidence="11">
    <location>
        <begin position="1"/>
        <end position="17"/>
    </location>
</feature>
<feature type="transmembrane region" description="Helical" evidence="6">
    <location>
        <begin position="18"/>
        <end position="38"/>
    </location>
</feature>
<feature type="topological domain" description="Lumenal" evidence="11">
    <location>
        <begin position="39"/>
        <end position="119"/>
    </location>
</feature>
<feature type="transmembrane region" description="Helical" evidence="3">
    <location>
        <begin position="120"/>
        <end position="138"/>
    </location>
</feature>
<feature type="topological domain" description="Cytoplasmic" evidence="11">
    <location>
        <begin position="139"/>
        <end position="140"/>
    </location>
</feature>
<feature type="transmembrane region" description="Helical" evidence="3">
    <location>
        <begin position="141"/>
        <end position="158"/>
    </location>
</feature>
<feature type="topological domain" description="Lumenal" evidence="11">
    <location>
        <begin position="159"/>
        <end position="169"/>
    </location>
</feature>
<feature type="transmembrane region" description="Helical" evidence="3">
    <location>
        <begin position="170"/>
        <end position="189"/>
    </location>
</feature>
<feature type="topological domain" description="Cytoplasmic" evidence="11">
    <location>
        <begin position="190"/>
        <end position="191"/>
    </location>
</feature>
<feature type="transmembrane region" description="Helical" evidence="3">
    <location>
        <begin position="192"/>
        <end position="206"/>
    </location>
</feature>
<feature type="topological domain" description="Lumenal" evidence="11">
    <location>
        <begin position="207"/>
        <end position="211"/>
    </location>
</feature>
<feature type="transmembrane region" description="Helical" evidence="3">
    <location>
        <begin position="212"/>
        <end position="228"/>
    </location>
</feature>
<feature type="topological domain" description="Cytoplasmic" evidence="11">
    <location>
        <begin position="229"/>
        <end position="233"/>
    </location>
</feature>
<feature type="transmembrane region" description="Helical" evidence="3">
    <location>
        <begin position="234"/>
        <end position="259"/>
    </location>
</feature>
<feature type="topological domain" description="Lumenal" evidence="11">
    <location>
        <begin position="260"/>
        <end position="267"/>
    </location>
</feature>
<feature type="transmembrane region" description="Helical" evidence="3">
    <location>
        <begin position="268"/>
        <end position="287"/>
    </location>
</feature>
<feature type="topological domain" description="Cytoplasmic" evidence="11">
    <location>
        <begin position="288"/>
        <end position="300"/>
    </location>
</feature>
<feature type="transmembrane region" description="Helical" evidence="6">
    <location>
        <begin position="301"/>
        <end position="321"/>
    </location>
</feature>
<feature type="topological domain" description="Lumenal" evidence="11">
    <location>
        <begin position="322"/>
        <end position="356"/>
    </location>
</feature>
<feature type="transmembrane region" description="Helical" evidence="3">
    <location>
        <begin position="357"/>
        <end position="379"/>
    </location>
</feature>
<feature type="topological domain" description="Cytoplasmic" evidence="11">
    <location>
        <begin position="380"/>
        <end position="385"/>
    </location>
</feature>
<feature type="transmembrane region" description="Helical" evidence="3">
    <location>
        <begin position="386"/>
        <end position="402"/>
    </location>
</feature>
<feature type="topological domain" description="Lumenal" evidence="11">
    <location>
        <begin position="403"/>
        <end position="406"/>
    </location>
</feature>
<feature type="transmembrane region" description="Helical" evidence="3">
    <location>
        <begin position="407"/>
        <end position="428"/>
    </location>
</feature>
<feature type="topological domain" description="Cytoplasmic" evidence="11">
    <location>
        <begin position="429"/>
        <end position="453"/>
    </location>
</feature>
<feature type="transmembrane region" description="Helical" evidence="3">
    <location>
        <begin position="454"/>
        <end position="473"/>
    </location>
</feature>
<feature type="topological domain" description="Lumenal" evidence="11">
    <location>
        <begin position="474"/>
        <end position="705"/>
    </location>
</feature>
<feature type="region of interest" description="Interacts with target acceptor peptide in protein substrate" evidence="1">
    <location>
        <begin position="525"/>
        <end position="527"/>
    </location>
</feature>
<feature type="short sequence motif" description="DXD motif 1" evidence="5">
    <location>
        <begin position="47"/>
        <end position="49"/>
    </location>
</feature>
<feature type="short sequence motif" description="DXD motif 2" evidence="3">
    <location>
        <begin position="167"/>
        <end position="169"/>
    </location>
</feature>
<feature type="short sequence motif" description="SVSE motif" evidence="5">
    <location>
        <begin position="348"/>
        <end position="351"/>
    </location>
</feature>
<feature type="short sequence motif" description="WWDYG motif" evidence="3">
    <location>
        <begin position="525"/>
        <end position="529"/>
    </location>
</feature>
<feature type="short sequence motif" description="DK motif" evidence="3">
    <location>
        <begin position="592"/>
        <end position="599"/>
    </location>
</feature>
<feature type="binding site" evidence="1">
    <location>
        <position position="49"/>
    </location>
    <ligand>
        <name>Mn(2+)</name>
        <dbReference type="ChEBI" id="CHEBI:29035"/>
    </ligand>
</feature>
<feature type="binding site" evidence="1">
    <location>
        <position position="167"/>
    </location>
    <ligand>
        <name>Mn(2+)</name>
        <dbReference type="ChEBI" id="CHEBI:29035"/>
    </ligand>
</feature>
<feature type="binding site" evidence="1">
    <location>
        <position position="169"/>
    </location>
    <ligand>
        <name>Mn(2+)</name>
        <dbReference type="ChEBI" id="CHEBI:29035"/>
    </ligand>
</feature>
<feature type="binding site" evidence="1">
    <location>
        <position position="405"/>
    </location>
    <ligand>
        <name>dolichyl diphosphooligosaccharide</name>
        <dbReference type="ChEBI" id="CHEBI:57570"/>
    </ligand>
</feature>
<feature type="binding site" evidence="1">
    <location>
        <position position="530"/>
    </location>
    <ligand>
        <name>dolichyl diphosphooligosaccharide</name>
        <dbReference type="ChEBI" id="CHEBI:57570"/>
    </ligand>
</feature>
<feature type="site" description="Interacts with target acceptor peptide in protein substrate" evidence="1">
    <location>
        <position position="49"/>
    </location>
</feature>
<feature type="site" description="Important for catalytic activity" evidence="1">
    <location>
        <position position="160"/>
    </location>
</feature>
<feature type="site" description="Interacts with target acceptor peptide in protein substrate" evidence="1">
    <location>
        <position position="351"/>
    </location>
</feature>
<feature type="site" description="Interacts with target acceptor peptide in protein substrate" evidence="1">
    <location>
        <position position="595"/>
    </location>
</feature>
<feature type="glycosylation site" description="N-linked (GlcNAc...) asparagine" evidence="7">
    <location>
        <position position="537"/>
    </location>
</feature>
<feature type="glycosylation site" description="N-linked (GlcNAc...) asparagine" evidence="7">
    <location>
        <position position="544"/>
    </location>
</feature>
<feature type="glycosylation site" description="N-linked (GlcNAc...) (high mannose) asparagine" evidence="10">
    <location>
        <position position="548"/>
    </location>
</feature>
<proteinExistence type="evidence at protein level"/>
<dbReference type="EC" id="2.4.99.18"/>
<dbReference type="EMBL" id="L34260">
    <property type="protein sequence ID" value="AAB47775.1"/>
    <property type="molecule type" value="mRNA"/>
</dbReference>
<dbReference type="EMBL" id="BC037612">
    <property type="protein sequence ID" value="AAH37612.1"/>
    <property type="molecule type" value="mRNA"/>
</dbReference>
<dbReference type="CCDS" id="CCDS52768.1"/>
<dbReference type="RefSeq" id="NP_032434.3">
    <property type="nucleotide sequence ID" value="NM_008408.4"/>
</dbReference>
<dbReference type="SMR" id="P46978"/>
<dbReference type="BioGRID" id="200842">
    <property type="interactions" value="5"/>
</dbReference>
<dbReference type="ComplexPortal" id="CPX-5821">
    <property type="entry name" value="Oligosaccharyltransferase complex A"/>
</dbReference>
<dbReference type="FunCoup" id="P46978">
    <property type="interactions" value="1537"/>
</dbReference>
<dbReference type="IntAct" id="P46978">
    <property type="interactions" value="1"/>
</dbReference>
<dbReference type="STRING" id="10090.ENSMUSP00000113116"/>
<dbReference type="CAZy" id="GT66">
    <property type="family name" value="Glycosyltransferase Family 66"/>
</dbReference>
<dbReference type="GlyConnect" id="2264">
    <property type="glycosylation" value="4 N-Linked glycans (2 sites)"/>
</dbReference>
<dbReference type="GlyCosmos" id="P46978">
    <property type="glycosylation" value="3 sites, 3 glycans"/>
</dbReference>
<dbReference type="GlyGen" id="P46978">
    <property type="glycosylation" value="4 sites, 5 N-linked glycans (2 sites), 1 O-linked glycan (1 site)"/>
</dbReference>
<dbReference type="iPTMnet" id="P46978"/>
<dbReference type="PhosphoSitePlus" id="P46978"/>
<dbReference type="SwissPalm" id="P46978"/>
<dbReference type="jPOST" id="P46978"/>
<dbReference type="PaxDb" id="10090-ENSMUSP00000113116"/>
<dbReference type="PeptideAtlas" id="P46978"/>
<dbReference type="ProteomicsDB" id="258766"/>
<dbReference type="Pumba" id="P46978"/>
<dbReference type="Antibodypedia" id="32954">
    <property type="antibodies" value="105 antibodies from 24 providers"/>
</dbReference>
<dbReference type="DNASU" id="16430"/>
<dbReference type="Ensembl" id="ENSMUST00000120381.9">
    <property type="protein sequence ID" value="ENSMUSP00000113116.2"/>
    <property type="gene ID" value="ENSMUSG00000032116.19"/>
</dbReference>
<dbReference type="GeneID" id="16430"/>
<dbReference type="KEGG" id="mmu:16430"/>
<dbReference type="UCSC" id="uc009oty.1">
    <property type="organism name" value="mouse"/>
</dbReference>
<dbReference type="AGR" id="MGI:105124"/>
<dbReference type="CTD" id="3703"/>
<dbReference type="MGI" id="MGI:105124">
    <property type="gene designation" value="Stt3a"/>
</dbReference>
<dbReference type="VEuPathDB" id="HostDB:ENSMUSG00000032116"/>
<dbReference type="eggNOG" id="KOG2292">
    <property type="taxonomic scope" value="Eukaryota"/>
</dbReference>
<dbReference type="GeneTree" id="ENSGT00940000156655"/>
<dbReference type="HOGENOM" id="CLU_009279_1_0_1"/>
<dbReference type="InParanoid" id="P46978"/>
<dbReference type="OMA" id="TWYAIGT"/>
<dbReference type="OrthoDB" id="10261066at2759"/>
<dbReference type="PhylomeDB" id="P46978"/>
<dbReference type="TreeFam" id="TF300822"/>
<dbReference type="UniPathway" id="UPA00378"/>
<dbReference type="BioGRID-ORCS" id="16430">
    <property type="hits" value="16 hits in 82 CRISPR screens"/>
</dbReference>
<dbReference type="ChiTaRS" id="Stt3a">
    <property type="organism name" value="mouse"/>
</dbReference>
<dbReference type="PRO" id="PR:P46978"/>
<dbReference type="Proteomes" id="UP000000589">
    <property type="component" value="Chromosome 9"/>
</dbReference>
<dbReference type="RNAct" id="P46978">
    <property type="molecule type" value="protein"/>
</dbReference>
<dbReference type="Bgee" id="ENSMUSG00000032116">
    <property type="expression patterns" value="Expressed in otic placode and 259 other cell types or tissues"/>
</dbReference>
<dbReference type="ExpressionAtlas" id="P46978">
    <property type="expression patterns" value="baseline and differential"/>
</dbReference>
<dbReference type="GO" id="GO:0005789">
    <property type="term" value="C:endoplasmic reticulum membrane"/>
    <property type="evidence" value="ECO:0000303"/>
    <property type="project" value="ComplexPortal"/>
</dbReference>
<dbReference type="GO" id="GO:0016020">
    <property type="term" value="C:membrane"/>
    <property type="evidence" value="ECO:0000314"/>
    <property type="project" value="MGI"/>
</dbReference>
<dbReference type="GO" id="GO:0008250">
    <property type="term" value="C:oligosaccharyltransferase complex"/>
    <property type="evidence" value="ECO:0000250"/>
    <property type="project" value="UniProtKB"/>
</dbReference>
<dbReference type="GO" id="GO:0160226">
    <property type="term" value="C:oligosaccharyltransferase complex A"/>
    <property type="evidence" value="ECO:0007669"/>
    <property type="project" value="Ensembl"/>
</dbReference>
<dbReference type="GO" id="GO:0004579">
    <property type="term" value="F:dolichyl-diphosphooligosaccharide-protein glycotransferase activity"/>
    <property type="evidence" value="ECO:0000250"/>
    <property type="project" value="UniProtKB"/>
</dbReference>
<dbReference type="GO" id="GO:0046872">
    <property type="term" value="F:metal ion binding"/>
    <property type="evidence" value="ECO:0007669"/>
    <property type="project" value="UniProtKB-KW"/>
</dbReference>
<dbReference type="GO" id="GO:0043686">
    <property type="term" value="P:co-translational protein modification"/>
    <property type="evidence" value="ECO:0000250"/>
    <property type="project" value="UniProtKB"/>
</dbReference>
<dbReference type="GO" id="GO:0018279">
    <property type="term" value="P:protein N-linked glycosylation via asparagine"/>
    <property type="evidence" value="ECO:0000250"/>
    <property type="project" value="UniProtKB"/>
</dbReference>
<dbReference type="FunFam" id="3.40.50.12610:FF:000002">
    <property type="entry name" value="dolichyl-diphosphooligosaccharide--protein glycosyltransferase subunit STT3A"/>
    <property type="match status" value="1"/>
</dbReference>
<dbReference type="Gene3D" id="3.40.50.12610">
    <property type="match status" value="1"/>
</dbReference>
<dbReference type="InterPro" id="IPR054479">
    <property type="entry name" value="AglB-like_core"/>
</dbReference>
<dbReference type="InterPro" id="IPR003674">
    <property type="entry name" value="Oligo_trans_STT3"/>
</dbReference>
<dbReference type="InterPro" id="IPR048307">
    <property type="entry name" value="STT3_N"/>
</dbReference>
<dbReference type="PANTHER" id="PTHR13872">
    <property type="entry name" value="DOLICHYL-DIPHOSPHOOLIGOSACCHARIDE--PROTEIN GLYCOSYLTRANSFERASE SUBUNIT"/>
    <property type="match status" value="1"/>
</dbReference>
<dbReference type="PANTHER" id="PTHR13872:SF43">
    <property type="entry name" value="DOLICHYL-DIPHOSPHOOLIGOSACCHARIDE--PROTEIN GLYCOSYLTRANSFERASE SUBUNIT STT3A"/>
    <property type="match status" value="1"/>
</dbReference>
<dbReference type="Pfam" id="PF22627">
    <property type="entry name" value="AglB_core-like"/>
    <property type="match status" value="1"/>
</dbReference>
<dbReference type="Pfam" id="PF02516">
    <property type="entry name" value="STT3"/>
    <property type="match status" value="1"/>
</dbReference>
<reference key="1">
    <citation type="journal article" date="1996" name="Genomics">
        <title>Molecular cloning of a highly conserved mouse and human integral membrane protein (Itm1) and genetic mapping to mouse chromosome 9.</title>
        <authorList>
            <person name="Hong G."/>
            <person name="Deleersnjider W."/>
            <person name="Kozak C.A."/>
            <person name="van Marck E."/>
            <person name="Tylzanowski P."/>
            <person name="Merregaert J."/>
        </authorList>
    </citation>
    <scope>NUCLEOTIDE SEQUENCE [MRNA]</scope>
    <source>
        <strain>BALB/cJ</strain>
        <tissue>Mandibular condyle</tissue>
    </source>
</reference>
<reference key="2">
    <citation type="journal article" date="2004" name="Genome Res.">
        <title>The status, quality, and expansion of the NIH full-length cDNA project: the Mammalian Gene Collection (MGC).</title>
        <authorList>
            <consortium name="The MGC Project Team"/>
        </authorList>
    </citation>
    <scope>NUCLEOTIDE SEQUENCE [LARGE SCALE MRNA]</scope>
    <source>
        <strain>FVB/N</strain>
        <tissue>Mammary gland</tissue>
    </source>
</reference>
<reference key="3">
    <citation type="submission" date="2009-01" db="UniProtKB">
        <authorList>
            <person name="Lubec G."/>
            <person name="Sunyer B."/>
            <person name="Chen W.-Q."/>
        </authorList>
    </citation>
    <scope>PROTEIN SEQUENCE OF 696-704</scope>
    <scope>IDENTIFICATION BY MASS SPECTROMETRY</scope>
    <source>
        <strain>OF1</strain>
        <tissue>Hippocampus</tissue>
    </source>
</reference>
<reference key="4">
    <citation type="journal article" date="2003" name="Mol. Cell">
        <title>Oligosaccharyltransferase isoforms that contain different catalytic STT3 subunits have distinct enzymatic properties.</title>
        <authorList>
            <person name="Kelleher D.J."/>
            <person name="Karaoglu D."/>
            <person name="Mandon E.C."/>
            <person name="Gilmore R."/>
        </authorList>
    </citation>
    <scope>TISSUE SPECIFICITY</scope>
    <scope>SUBCELLULAR LOCATION</scope>
</reference>
<reference key="5">
    <citation type="journal article" date="2005" name="J. Biol. Chem.">
        <title>Membrane topology of the STT3 subunit of the oligosaccharyl transferase complex.</title>
        <authorList>
            <person name="Kim H."/>
            <person name="von Heijne G."/>
            <person name="Nilsson I."/>
        </authorList>
    </citation>
    <scope>TOPOLOGY</scope>
    <scope>SUBCELLULAR LOCATION</scope>
</reference>
<reference key="6">
    <citation type="journal article" date="2009" name="Nat. Biotechnol.">
        <title>Mass-spectrometric identification and relative quantification of N-linked cell surface glycoproteins.</title>
        <authorList>
            <person name="Wollscheid B."/>
            <person name="Bausch-Fluck D."/>
            <person name="Henderson C."/>
            <person name="O'Brien R."/>
            <person name="Bibel M."/>
            <person name="Schiess R."/>
            <person name="Aebersold R."/>
            <person name="Watts J.D."/>
        </authorList>
    </citation>
    <scope>GLYCOSYLATION [LARGE SCALE ANALYSIS] AT ASN-548</scope>
</reference>
<reference key="7">
    <citation type="journal article" date="2010" name="Cell">
        <title>A tissue-specific atlas of mouse protein phosphorylation and expression.</title>
        <authorList>
            <person name="Huttlin E.L."/>
            <person name="Jedrychowski M.P."/>
            <person name="Elias J.E."/>
            <person name="Goswami T."/>
            <person name="Rad R."/>
            <person name="Beausoleil S.A."/>
            <person name="Villen J."/>
            <person name="Haas W."/>
            <person name="Sowa M.E."/>
            <person name="Gygi S.P."/>
        </authorList>
    </citation>
    <scope>IDENTIFICATION BY MASS SPECTROMETRY [LARGE SCALE ANALYSIS]</scope>
    <source>
        <tissue>Brown adipose tissue</tissue>
        <tissue>Kidney</tissue>
        <tissue>Liver</tissue>
        <tissue>Lung</tissue>
        <tissue>Pancreas</tissue>
        <tissue>Spleen</tissue>
        <tissue>Testis</tissue>
    </source>
</reference>
<gene>
    <name evidence="12" type="primary">Stt3a</name>
    <name type="synonym">Itm1</name>
</gene>
<keyword id="KW-0903">Direct protein sequencing</keyword>
<keyword id="KW-0256">Endoplasmic reticulum</keyword>
<keyword id="KW-0325">Glycoprotein</keyword>
<keyword id="KW-0328">Glycosyltransferase</keyword>
<keyword id="KW-0460">Magnesium</keyword>
<keyword id="KW-0464">Manganese</keyword>
<keyword id="KW-0472">Membrane</keyword>
<keyword id="KW-0479">Metal-binding</keyword>
<keyword id="KW-1185">Reference proteome</keyword>
<keyword id="KW-0808">Transferase</keyword>
<keyword id="KW-0812">Transmembrane</keyword>
<keyword id="KW-1133">Transmembrane helix</keyword>
<evidence type="ECO:0000250" key="1">
    <source>
        <dbReference type="UniProtKB" id="B9KDD4"/>
    </source>
</evidence>
<evidence type="ECO:0000250" key="2">
    <source>
        <dbReference type="UniProtKB" id="F1PJP5"/>
    </source>
</evidence>
<evidence type="ECO:0000250" key="3">
    <source>
        <dbReference type="UniProtKB" id="P39007"/>
    </source>
</evidence>
<evidence type="ECO:0000250" key="4">
    <source>
        <dbReference type="UniProtKB" id="P46977"/>
    </source>
</evidence>
<evidence type="ECO:0000250" key="5">
    <source>
        <dbReference type="UniProtKB" id="Q5HTX9"/>
    </source>
</evidence>
<evidence type="ECO:0000255" key="6"/>
<evidence type="ECO:0000255" key="7">
    <source>
        <dbReference type="PROSITE-ProRule" id="PRU00498"/>
    </source>
</evidence>
<evidence type="ECO:0000269" key="8">
    <source>
    </source>
</evidence>
<evidence type="ECO:0000269" key="9">
    <source>
    </source>
</evidence>
<evidence type="ECO:0000269" key="10">
    <source>
    </source>
</evidence>
<evidence type="ECO:0000305" key="11"/>
<evidence type="ECO:0000312" key="12">
    <source>
        <dbReference type="MGI" id="MGI:105124"/>
    </source>
</evidence>
<comment type="function">
    <text evidence="4">Catalytic subunit of the oligosaccharyl transferase (OST) complex that catalyzes the initial transfer of a defined glycan (Glc(3)Man(9)GlcNAc(2) in eukaryotes) from the lipid carrier dolichol-pyrophosphate to an asparagine residue within an Asn-X-Ser/Thr consensus motif in nascent polypeptide chains, the first step in protein N-glycosylation. N-glycosylation occurs cotranslationally and the complex associates with the Sec61 complex at the channel-forming translocon complex that mediates protein translocation across the endoplasmic reticulum (ER). All subunits are required for a maximal enzyme activity. This subunit contains the active site and the acceptor peptide and donor lipid-linked oligosaccharide (LLO) binding pockets. STT3A is present in the majority of OST complexes and mediates cotranslational N-glycosylation of most sites on target proteins, while STT3B-containing complexes are required for efficient post-translational glycosylation and mediate glycosylation of sites that have been skipped by STT3A. STT3A-containing OST-A complex is also required to prevent hyperglycosylation of some target proteins by preventing glycosylation of facultative sites before folding of target proteins is completed.</text>
</comment>
<comment type="catalytic activity">
    <reaction evidence="3">
        <text>a di-trans,poly-cis-dolichyl diphosphooligosaccharide + L-asparaginyl-[protein] = N(4)-(oligosaccharide-(1-&gt;4)-N-acetyl-beta-D-glucosaminyl-(1-&gt;4)-N-acetyl-beta-D-glucosaminyl)-L-asparaginyl-[protein] + a di-trans,poly-cis-dolichyl diphosphate + H(+)</text>
        <dbReference type="Rhea" id="RHEA:22980"/>
        <dbReference type="Rhea" id="RHEA-COMP:12804"/>
        <dbReference type="Rhea" id="RHEA-COMP:12805"/>
        <dbReference type="Rhea" id="RHEA-COMP:19506"/>
        <dbReference type="Rhea" id="RHEA-COMP:19509"/>
        <dbReference type="ChEBI" id="CHEBI:15378"/>
        <dbReference type="ChEBI" id="CHEBI:50347"/>
        <dbReference type="ChEBI" id="CHEBI:57497"/>
        <dbReference type="ChEBI" id="CHEBI:57570"/>
        <dbReference type="ChEBI" id="CHEBI:132529"/>
        <dbReference type="EC" id="2.4.99.18"/>
    </reaction>
</comment>
<comment type="cofactor">
    <cofactor evidence="4">
        <name>Mg(2+)</name>
        <dbReference type="ChEBI" id="CHEBI:18420"/>
    </cofactor>
    <cofactor evidence="1">
        <name>Mn(2+)</name>
        <dbReference type="ChEBI" id="CHEBI:29035"/>
    </cofactor>
</comment>
<comment type="pathway">
    <text evidence="4">Protein modification; protein glycosylation.</text>
</comment>
<comment type="subunit">
    <text evidence="2 4">Component of the oligosaccharyltransferase (OST) complex. There are 2 OST complexes, OST-A and OST-B, which contain STT3A or STT3B as catalytic subunit, respectively. OST-A and OST-B contain common core subunits RPN1, RPN2, OST48, OST4, DAD1 and TMEM258, and OST-A contains DC2/OSTC and KRTCAP2/KCP2 specific accessory subunits (By similarity). OST-A complex assembly occurs through the formation of 3 subcomplexes. Subcomplex 1 contains RPN1 and TMEM258, subcomplex 2 contains the OST-A-specific subunits STT3A, DC2/OSTC, and KCP2 as well as the core subunit OST4, and subcomplex 3 contains RPN2, DAD1, and OST48. The OST-A complex can form stable complexes with the Sec61 complex or with both the Sec61 and TRAP complexes (By similarity).</text>
</comment>
<comment type="subcellular location">
    <subcellularLocation>
        <location evidence="8 9">Endoplasmic reticulum</location>
    </subcellularLocation>
    <subcellularLocation>
        <location evidence="9">Endoplasmic reticulum membrane</location>
        <topology evidence="9">Multi-pass membrane protein</topology>
    </subcellularLocation>
</comment>
<comment type="domain">
    <text evidence="3">Despite low primary sequence conservation between eukaryotic catalytic subunits and bacterial and archaeal single subunit OSTs (ssOST), structural comparison revealed several common motifs at spatially equivalent positions, like the DXD motif 1 on the external loop 1 and the DXD motif 2 on the external loop 2 involved in binding of the metal ion cofactor and the carboxamide group of the acceptor asparagine, the conserved Glu residue of the TIXE/SVSE motif on the external loop 5 involved in catalysis, as well as the WWDYG and the DK/MI motifs in the globular domain that define the binding pocket for the +2 Ser/Thr of the acceptor sequon. In bacterial ssOSTs, an Arg residue was found to interact with a negatively charged side chain at the -2 position of the sequon. This Arg is conserved in bacterial enzymes and correlates with an extended sequon requirement (Asp-X-Asn-X-Ser/Thr) for bacterial N-glycosylation.</text>
</comment>
<comment type="similarity">
    <text evidence="11">Belongs to the STT3 family.</text>
</comment>
<sequence length="705" mass="80598">MTKLGFLRLSYEKQDTLLKLLILSMAAVLSFSTRLFAVLRFESVIHEFDPYFNYRTTRFLAEEGFYKFHNWFDDRAWYPLGRIIGGTIYPGLMITSAAIYHVLHFFHITIDIRNVCVFLAPLFSSFTTIVTYHLTKELKDAGAGLLAAAMIAVVPGYISRSVAGSYDNEGIAIFCMLLTYYMWIKAVKTGSIYWAAKCALAYFYMVSSWGGYVFLINLIPLHVLVLMLTGRFSHRIYVAYCTVYCLGTILSMQISFVGFQPVLSSEHMAAFGVFGLCQIHAFVDYLRSKLNPQQFEVLFRSVISLVGFVLLTVGALLMLTGKISPWTGRFYSLLDPSYAKNNIPIIASVSEHQPTTWSSYYFDLQLLVFMFPVGLYYCFSNLSDARIFIIMYGVTSMYFSAVMVRLMLVLAPVMCILSGIGVSQVLSTYMKNLDISRPDKKSKKQQDSTYPIKNEVASGMILVMAFFLITYTFHSTWVTSEAYSSPSIVLSARGGDGSRIIFDDFREAYYWLRHNTPEDAKVMSWWDYGYQITAMANRTILVDNNTWNNTHISRVGQAMASTEEKAYEIMRELDVSYVLVIFGGLTGYSSDDINKFLWMVRIGGSTETGRHIKENDYYTPTGEFRVDREGSPVLLNCLMYKMCYYRFGQVYTEAKRPPGFDRVRNAEIGNKDFELDVLEEAYTTEHWLVRIYKVKDLDNRGLSRT</sequence>
<accession>P46978</accession>
<protein>
    <recommendedName>
        <fullName evidence="11">Dolichyl-diphosphooligosaccharide--protein glycosyltransferase subunit STT3A</fullName>
        <shortName>Oligosaccharyl transferase subunit STT3A</shortName>
        <shortName>STT3-A</shortName>
        <ecNumber>2.4.99.18</ecNumber>
    </recommendedName>
    <alternativeName>
        <fullName>B5</fullName>
    </alternativeName>
    <alternativeName>
        <fullName>Integral membrane protein 1</fullName>
    </alternativeName>
</protein>
<organism>
    <name type="scientific">Mus musculus</name>
    <name type="common">Mouse</name>
    <dbReference type="NCBI Taxonomy" id="10090"/>
    <lineage>
        <taxon>Eukaryota</taxon>
        <taxon>Metazoa</taxon>
        <taxon>Chordata</taxon>
        <taxon>Craniata</taxon>
        <taxon>Vertebrata</taxon>
        <taxon>Euteleostomi</taxon>
        <taxon>Mammalia</taxon>
        <taxon>Eutheria</taxon>
        <taxon>Euarchontoglires</taxon>
        <taxon>Glires</taxon>
        <taxon>Rodentia</taxon>
        <taxon>Myomorpha</taxon>
        <taxon>Muroidea</taxon>
        <taxon>Muridae</taxon>
        <taxon>Murinae</taxon>
        <taxon>Mus</taxon>
        <taxon>Mus</taxon>
    </lineage>
</organism>